<sequence length="354" mass="38922">MNEAIIQLDHIDITFRQKKRVIEAVKDVTVHINQGDIYGIVGYSGAGKSTLVRVINLLQAPTNGKITVDGDVTFEQGKVQLSANALRQKRRDIGMIFQHFNLMAQKTAKENVAFALRHSSLSKTEKEHKVIELLELVGLSERADNYPAQLSGGQKQRVAIARALANDPKILISDEATSALDPKTTKQILALLQELNRKLGLTIVMITHEMQIVKDICNRVAVMQNGVLIEEGSVLDIFSNPKEALTQEFITTATGIDEALEKINQQDIVKHLPANALLAQLKYAGTSTDEPLLNSIYRQFEVTANILYGNIEILDHIPVGDMIVVLEGQAENILAAEKALHEAGVDVSILKRGA</sequence>
<feature type="chain" id="PRO_0000270423" description="Methionine import ATP-binding protein MetN">
    <location>
        <begin position="1"/>
        <end position="354"/>
    </location>
</feature>
<feature type="domain" description="ABC transporter" evidence="1">
    <location>
        <begin position="8"/>
        <end position="250"/>
    </location>
</feature>
<feature type="binding site" evidence="1">
    <location>
        <begin position="42"/>
        <end position="49"/>
    </location>
    <ligand>
        <name>ATP</name>
        <dbReference type="ChEBI" id="CHEBI:30616"/>
    </ligand>
</feature>
<reference key="1">
    <citation type="journal article" date="2002" name="Proc. Natl. Acad. Sci. U.S.A.">
        <title>Genome sequence of a serotype M3 strain of group A Streptococcus: phage-encoded toxins, the high-virulence phenotype, and clone emergence.</title>
        <authorList>
            <person name="Beres S.B."/>
            <person name="Sylva G.L."/>
            <person name="Barbian K.D."/>
            <person name="Lei B."/>
            <person name="Hoff J.S."/>
            <person name="Mammarella N.D."/>
            <person name="Liu M.-Y."/>
            <person name="Smoot J.C."/>
            <person name="Porcella S.F."/>
            <person name="Parkins L.D."/>
            <person name="Campbell D.S."/>
            <person name="Smith T.M."/>
            <person name="McCormick J.K."/>
            <person name="Leung D.Y.M."/>
            <person name="Schlievert P.M."/>
            <person name="Musser J.M."/>
        </authorList>
    </citation>
    <scope>NUCLEOTIDE SEQUENCE [LARGE SCALE GENOMIC DNA]</scope>
    <source>
        <strain>ATCC BAA-595 / MGAS315</strain>
    </source>
</reference>
<gene>
    <name evidence="1" type="primary">metN</name>
    <name type="ordered locus">SpyM3_0234</name>
</gene>
<accession>P0CZ30</accession>
<accession>Q79WB7</accession>
<accession>Q8K8K8</accession>
<keyword id="KW-0029">Amino-acid transport</keyword>
<keyword id="KW-0067">ATP-binding</keyword>
<keyword id="KW-1003">Cell membrane</keyword>
<keyword id="KW-0472">Membrane</keyword>
<keyword id="KW-0547">Nucleotide-binding</keyword>
<keyword id="KW-1278">Translocase</keyword>
<keyword id="KW-0813">Transport</keyword>
<organism>
    <name type="scientific">Streptococcus pyogenes serotype M3 (strain ATCC BAA-595 / MGAS315)</name>
    <dbReference type="NCBI Taxonomy" id="198466"/>
    <lineage>
        <taxon>Bacteria</taxon>
        <taxon>Bacillati</taxon>
        <taxon>Bacillota</taxon>
        <taxon>Bacilli</taxon>
        <taxon>Lactobacillales</taxon>
        <taxon>Streptococcaceae</taxon>
        <taxon>Streptococcus</taxon>
    </lineage>
</organism>
<name>METN_STRP3</name>
<evidence type="ECO:0000255" key="1">
    <source>
        <dbReference type="HAMAP-Rule" id="MF_01719"/>
    </source>
</evidence>
<comment type="function">
    <text evidence="1">Part of the ABC transporter complex MetNIQ involved in methionine import. Responsible for energy coupling to the transport system.</text>
</comment>
<comment type="catalytic activity">
    <reaction evidence="1">
        <text>L-methionine(out) + ATP + H2O = L-methionine(in) + ADP + phosphate + H(+)</text>
        <dbReference type="Rhea" id="RHEA:29779"/>
        <dbReference type="ChEBI" id="CHEBI:15377"/>
        <dbReference type="ChEBI" id="CHEBI:15378"/>
        <dbReference type="ChEBI" id="CHEBI:30616"/>
        <dbReference type="ChEBI" id="CHEBI:43474"/>
        <dbReference type="ChEBI" id="CHEBI:57844"/>
        <dbReference type="ChEBI" id="CHEBI:456216"/>
        <dbReference type="EC" id="7.4.2.11"/>
    </reaction>
</comment>
<comment type="catalytic activity">
    <reaction evidence="1">
        <text>D-methionine(out) + ATP + H2O = D-methionine(in) + ADP + phosphate + H(+)</text>
        <dbReference type="Rhea" id="RHEA:29767"/>
        <dbReference type="ChEBI" id="CHEBI:15377"/>
        <dbReference type="ChEBI" id="CHEBI:15378"/>
        <dbReference type="ChEBI" id="CHEBI:30616"/>
        <dbReference type="ChEBI" id="CHEBI:43474"/>
        <dbReference type="ChEBI" id="CHEBI:57932"/>
        <dbReference type="ChEBI" id="CHEBI:456216"/>
        <dbReference type="EC" id="7.4.2.11"/>
    </reaction>
</comment>
<comment type="subunit">
    <text evidence="1">The complex is composed of two ATP-binding proteins (MetN), two transmembrane proteins (MetI) and a solute-binding protein (MetQ).</text>
</comment>
<comment type="subcellular location">
    <subcellularLocation>
        <location evidence="1">Cell membrane</location>
        <topology evidence="1">Peripheral membrane protein</topology>
    </subcellularLocation>
</comment>
<comment type="similarity">
    <text evidence="1">Belongs to the ABC transporter superfamily. Methionine importer (TC 3.A.1.24) family.</text>
</comment>
<dbReference type="EC" id="7.4.2.11" evidence="1"/>
<dbReference type="EMBL" id="AE014074">
    <property type="protein sequence ID" value="AAM78841.1"/>
    <property type="molecule type" value="Genomic_DNA"/>
</dbReference>
<dbReference type="RefSeq" id="WP_011054194.1">
    <property type="nucleotide sequence ID" value="NC_004070.1"/>
</dbReference>
<dbReference type="SMR" id="P0CZ30"/>
<dbReference type="KEGG" id="spg:SpyM3_0234"/>
<dbReference type="HOGENOM" id="CLU_000604_1_3_9"/>
<dbReference type="Proteomes" id="UP000000564">
    <property type="component" value="Chromosome"/>
</dbReference>
<dbReference type="GO" id="GO:0005886">
    <property type="term" value="C:plasma membrane"/>
    <property type="evidence" value="ECO:0007669"/>
    <property type="project" value="UniProtKB-SubCell"/>
</dbReference>
<dbReference type="GO" id="GO:0033232">
    <property type="term" value="F:ABC-type D-methionine transporter activity"/>
    <property type="evidence" value="ECO:0007669"/>
    <property type="project" value="UniProtKB-EC"/>
</dbReference>
<dbReference type="GO" id="GO:0005524">
    <property type="term" value="F:ATP binding"/>
    <property type="evidence" value="ECO:0007669"/>
    <property type="project" value="UniProtKB-KW"/>
</dbReference>
<dbReference type="GO" id="GO:0016887">
    <property type="term" value="F:ATP hydrolysis activity"/>
    <property type="evidence" value="ECO:0007669"/>
    <property type="project" value="InterPro"/>
</dbReference>
<dbReference type="CDD" id="cd03258">
    <property type="entry name" value="ABC_MetN_methionine_transporter"/>
    <property type="match status" value="1"/>
</dbReference>
<dbReference type="Gene3D" id="3.30.70.260">
    <property type="match status" value="1"/>
</dbReference>
<dbReference type="Gene3D" id="3.40.50.300">
    <property type="entry name" value="P-loop containing nucleotide triphosphate hydrolases"/>
    <property type="match status" value="1"/>
</dbReference>
<dbReference type="InterPro" id="IPR003593">
    <property type="entry name" value="AAA+_ATPase"/>
</dbReference>
<dbReference type="InterPro" id="IPR003439">
    <property type="entry name" value="ABC_transporter-like_ATP-bd"/>
</dbReference>
<dbReference type="InterPro" id="IPR017871">
    <property type="entry name" value="ABC_transporter-like_CS"/>
</dbReference>
<dbReference type="InterPro" id="IPR045865">
    <property type="entry name" value="ACT-like_dom_sf"/>
</dbReference>
<dbReference type="InterPro" id="IPR041701">
    <property type="entry name" value="MetN_ABC"/>
</dbReference>
<dbReference type="InterPro" id="IPR050086">
    <property type="entry name" value="MetN_ABC_transporter-like"/>
</dbReference>
<dbReference type="InterPro" id="IPR018449">
    <property type="entry name" value="NIL_domain"/>
</dbReference>
<dbReference type="InterPro" id="IPR027417">
    <property type="entry name" value="P-loop_NTPase"/>
</dbReference>
<dbReference type="PANTHER" id="PTHR43166">
    <property type="entry name" value="AMINO ACID IMPORT ATP-BINDING PROTEIN"/>
    <property type="match status" value="1"/>
</dbReference>
<dbReference type="PANTHER" id="PTHR43166:SF30">
    <property type="entry name" value="METHIONINE IMPORT ATP-BINDING PROTEIN METN"/>
    <property type="match status" value="1"/>
</dbReference>
<dbReference type="Pfam" id="PF00005">
    <property type="entry name" value="ABC_tran"/>
    <property type="match status" value="1"/>
</dbReference>
<dbReference type="Pfam" id="PF09383">
    <property type="entry name" value="NIL"/>
    <property type="match status" value="1"/>
</dbReference>
<dbReference type="SMART" id="SM00382">
    <property type="entry name" value="AAA"/>
    <property type="match status" value="1"/>
</dbReference>
<dbReference type="SMART" id="SM00930">
    <property type="entry name" value="NIL"/>
    <property type="match status" value="1"/>
</dbReference>
<dbReference type="SUPFAM" id="SSF55021">
    <property type="entry name" value="ACT-like"/>
    <property type="match status" value="1"/>
</dbReference>
<dbReference type="SUPFAM" id="SSF52540">
    <property type="entry name" value="P-loop containing nucleoside triphosphate hydrolases"/>
    <property type="match status" value="1"/>
</dbReference>
<dbReference type="PROSITE" id="PS00211">
    <property type="entry name" value="ABC_TRANSPORTER_1"/>
    <property type="match status" value="1"/>
</dbReference>
<dbReference type="PROSITE" id="PS50893">
    <property type="entry name" value="ABC_TRANSPORTER_2"/>
    <property type="match status" value="1"/>
</dbReference>
<dbReference type="PROSITE" id="PS51264">
    <property type="entry name" value="METN"/>
    <property type="match status" value="1"/>
</dbReference>
<protein>
    <recommendedName>
        <fullName evidence="1">Methionine import ATP-binding protein MetN</fullName>
        <ecNumber evidence="1">7.4.2.11</ecNumber>
    </recommendedName>
</protein>
<proteinExistence type="inferred from homology"/>